<gene>
    <name type="primary">actR</name>
    <name type="ordered locus">R00065</name>
    <name type="ORF">SMc02584</name>
</gene>
<name>ACTR_RHIME</name>
<sequence>MIEKSMPAQNTHAADADLIGPDKSLLIVDDDTAFLRRLARAMEARGFAVEIAESVAEGIAKAKTRPPKHAVIDLRLSDGSGLDVIEAIRGRRDDTRMIVLTGYGNIATAVNAVKLGALDYLAKPADADDILAALIQRPGERVEPPENPMSADRVRWEHIQRVYEMCERNVSETARRLNMHRRTLQRILAKRAPK</sequence>
<organism>
    <name type="scientific">Rhizobium meliloti (strain 1021)</name>
    <name type="common">Ensifer meliloti</name>
    <name type="synonym">Sinorhizobium meliloti</name>
    <dbReference type="NCBI Taxonomy" id="266834"/>
    <lineage>
        <taxon>Bacteria</taxon>
        <taxon>Pseudomonadati</taxon>
        <taxon>Pseudomonadota</taxon>
        <taxon>Alphaproteobacteria</taxon>
        <taxon>Hyphomicrobiales</taxon>
        <taxon>Rhizobiaceae</taxon>
        <taxon>Sinorhizobium/Ensifer group</taxon>
        <taxon>Sinorhizobium</taxon>
    </lineage>
</organism>
<dbReference type="EMBL" id="AL591688">
    <property type="protein sequence ID" value="CAC41452.1"/>
    <property type="molecule type" value="Genomic_DNA"/>
</dbReference>
<dbReference type="RefSeq" id="NP_384171.1">
    <property type="nucleotide sequence ID" value="NC_003047.1"/>
</dbReference>
<dbReference type="RefSeq" id="WP_010968328.1">
    <property type="nucleotide sequence ID" value="NC_003047.1"/>
</dbReference>
<dbReference type="SMR" id="P0C5S3"/>
<dbReference type="EnsemblBacteria" id="CAC41452">
    <property type="protein sequence ID" value="CAC41452"/>
    <property type="gene ID" value="SMc02584"/>
</dbReference>
<dbReference type="GeneID" id="89574382"/>
<dbReference type="KEGG" id="sme:SMc02584"/>
<dbReference type="PATRIC" id="fig|266834.11.peg.1419"/>
<dbReference type="eggNOG" id="COG4567">
    <property type="taxonomic scope" value="Bacteria"/>
</dbReference>
<dbReference type="HOGENOM" id="CLU_000445_69_6_5"/>
<dbReference type="OrthoDB" id="9802426at2"/>
<dbReference type="Proteomes" id="UP000001976">
    <property type="component" value="Chromosome"/>
</dbReference>
<dbReference type="GO" id="GO:0003677">
    <property type="term" value="F:DNA binding"/>
    <property type="evidence" value="ECO:0007669"/>
    <property type="project" value="UniProtKB-KW"/>
</dbReference>
<dbReference type="GO" id="GO:0000160">
    <property type="term" value="P:phosphorelay signal transduction system"/>
    <property type="evidence" value="ECO:0007669"/>
    <property type="project" value="UniProtKB-KW"/>
</dbReference>
<dbReference type="CDD" id="cd17563">
    <property type="entry name" value="REC_RegA-like"/>
    <property type="match status" value="1"/>
</dbReference>
<dbReference type="FunFam" id="1.10.10.60:FF:000036">
    <property type="entry name" value="Two-component system response regulator"/>
    <property type="match status" value="1"/>
</dbReference>
<dbReference type="FunFam" id="3.40.50.2300:FF:000205">
    <property type="entry name" value="Two-component system response regulator"/>
    <property type="match status" value="1"/>
</dbReference>
<dbReference type="Gene3D" id="3.40.50.2300">
    <property type="match status" value="1"/>
</dbReference>
<dbReference type="Gene3D" id="1.10.10.60">
    <property type="entry name" value="Homeodomain-like"/>
    <property type="match status" value="1"/>
</dbReference>
<dbReference type="InterPro" id="IPR047772">
    <property type="entry name" value="ActR_PrrA_rreg"/>
</dbReference>
<dbReference type="InterPro" id="IPR050595">
    <property type="entry name" value="Bact_response_regulator"/>
</dbReference>
<dbReference type="InterPro" id="IPR011006">
    <property type="entry name" value="CheY-like_superfamily"/>
</dbReference>
<dbReference type="InterPro" id="IPR001789">
    <property type="entry name" value="Sig_transdc_resp-reg_receiver"/>
</dbReference>
<dbReference type="NCBIfam" id="NF033791">
    <property type="entry name" value="ActR_PrrA_rreg"/>
    <property type="match status" value="1"/>
</dbReference>
<dbReference type="PANTHER" id="PTHR44591:SF14">
    <property type="entry name" value="PROTEIN PILG"/>
    <property type="match status" value="1"/>
</dbReference>
<dbReference type="PANTHER" id="PTHR44591">
    <property type="entry name" value="STRESS RESPONSE REGULATOR PROTEIN 1"/>
    <property type="match status" value="1"/>
</dbReference>
<dbReference type="Pfam" id="PF00072">
    <property type="entry name" value="Response_reg"/>
    <property type="match status" value="1"/>
</dbReference>
<dbReference type="SMART" id="SM00448">
    <property type="entry name" value="REC"/>
    <property type="match status" value="1"/>
</dbReference>
<dbReference type="SUPFAM" id="SSF52172">
    <property type="entry name" value="CheY-like"/>
    <property type="match status" value="1"/>
</dbReference>
<dbReference type="PROSITE" id="PS50110">
    <property type="entry name" value="RESPONSE_REGULATORY"/>
    <property type="match status" value="1"/>
</dbReference>
<comment type="function">
    <text evidence="1">Member of the two-component regulatory system ActS/ActR acting in acid tolerance. These data implicate that a two-component sensor may be involved in pH sensing and/or response (By similarity).</text>
</comment>
<comment type="PTM">
    <text evidence="1">Phosphorylated by ActS.</text>
</comment>
<protein>
    <recommendedName>
        <fullName>Acid tolerance regulatory protein ActR</fullName>
    </recommendedName>
</protein>
<keyword id="KW-0238">DNA-binding</keyword>
<keyword id="KW-0597">Phosphoprotein</keyword>
<keyword id="KW-1185">Reference proteome</keyword>
<keyword id="KW-0804">Transcription</keyword>
<keyword id="KW-0805">Transcription regulation</keyword>
<keyword id="KW-0902">Two-component regulatory system</keyword>
<reference key="1">
    <citation type="journal article" date="2001" name="Proc. Natl. Acad. Sci. U.S.A.">
        <title>Analysis of the chromosome sequence of the legume symbiont Sinorhizobium meliloti strain 1021.</title>
        <authorList>
            <person name="Capela D."/>
            <person name="Barloy-Hubler F."/>
            <person name="Gouzy J."/>
            <person name="Bothe G."/>
            <person name="Ampe F."/>
            <person name="Batut J."/>
            <person name="Boistard P."/>
            <person name="Becker A."/>
            <person name="Boutry M."/>
            <person name="Cadieu E."/>
            <person name="Dreano S."/>
            <person name="Gloux S."/>
            <person name="Godrie T."/>
            <person name="Goffeau A."/>
            <person name="Kahn D."/>
            <person name="Kiss E."/>
            <person name="Lelaure V."/>
            <person name="Masuy D."/>
            <person name="Pohl T."/>
            <person name="Portetelle D."/>
            <person name="Puehler A."/>
            <person name="Purnelle B."/>
            <person name="Ramsperger U."/>
            <person name="Renard C."/>
            <person name="Thebault P."/>
            <person name="Vandenbol M."/>
            <person name="Weidner S."/>
            <person name="Galibert F."/>
        </authorList>
    </citation>
    <scope>NUCLEOTIDE SEQUENCE [LARGE SCALE GENOMIC DNA]</scope>
    <source>
        <strain>1021</strain>
    </source>
</reference>
<reference key="2">
    <citation type="journal article" date="2001" name="Science">
        <title>The composite genome of the legume symbiont Sinorhizobium meliloti.</title>
        <authorList>
            <person name="Galibert F."/>
            <person name="Finan T.M."/>
            <person name="Long S.R."/>
            <person name="Puehler A."/>
            <person name="Abola P."/>
            <person name="Ampe F."/>
            <person name="Barloy-Hubler F."/>
            <person name="Barnett M.J."/>
            <person name="Becker A."/>
            <person name="Boistard P."/>
            <person name="Bothe G."/>
            <person name="Boutry M."/>
            <person name="Bowser L."/>
            <person name="Buhrmester J."/>
            <person name="Cadieu E."/>
            <person name="Capela D."/>
            <person name="Chain P."/>
            <person name="Cowie A."/>
            <person name="Davis R.W."/>
            <person name="Dreano S."/>
            <person name="Federspiel N.A."/>
            <person name="Fisher R.F."/>
            <person name="Gloux S."/>
            <person name="Godrie T."/>
            <person name="Goffeau A."/>
            <person name="Golding B."/>
            <person name="Gouzy J."/>
            <person name="Gurjal M."/>
            <person name="Hernandez-Lucas I."/>
            <person name="Hong A."/>
            <person name="Huizar L."/>
            <person name="Hyman R.W."/>
            <person name="Jones T."/>
            <person name="Kahn D."/>
            <person name="Kahn M.L."/>
            <person name="Kalman S."/>
            <person name="Keating D.H."/>
            <person name="Kiss E."/>
            <person name="Komp C."/>
            <person name="Lelaure V."/>
            <person name="Masuy D."/>
            <person name="Palm C."/>
            <person name="Peck M.C."/>
            <person name="Pohl T.M."/>
            <person name="Portetelle D."/>
            <person name="Purnelle B."/>
            <person name="Ramsperger U."/>
            <person name="Surzycki R."/>
            <person name="Thebault P."/>
            <person name="Vandenbol M."/>
            <person name="Vorhoelter F.J."/>
            <person name="Weidner S."/>
            <person name="Wells D.H."/>
            <person name="Wong K."/>
            <person name="Yeh K.-C."/>
            <person name="Batut J."/>
        </authorList>
    </citation>
    <scope>NUCLEOTIDE SEQUENCE [LARGE SCALE GENOMIC DNA]</scope>
    <source>
        <strain>1021</strain>
    </source>
</reference>
<feature type="chain" id="PRO_0000080992" description="Acid tolerance regulatory protein ActR">
    <location>
        <begin position="1"/>
        <end position="194"/>
    </location>
</feature>
<feature type="domain" description="Response regulatory" evidence="2">
    <location>
        <begin position="24"/>
        <end position="138"/>
    </location>
</feature>
<feature type="modified residue" description="4-aspartylphosphate" evidence="2">
    <location>
        <position position="73"/>
    </location>
</feature>
<proteinExistence type="inferred from homology"/>
<evidence type="ECO:0000250" key="1"/>
<evidence type="ECO:0000255" key="2">
    <source>
        <dbReference type="PROSITE-ProRule" id="PRU00169"/>
    </source>
</evidence>
<accession>P0C5S3</accession>
<accession>Q52913</accession>